<gene>
    <name evidence="1" type="primary">codY</name>
    <name type="ordered locus">Sez_0387</name>
</gene>
<accession>B4U194</accession>
<comment type="function">
    <text evidence="1">DNA-binding global transcriptional regulator which is involved in the adaptive response to starvation and acts by directly or indirectly controlling the expression of numerous genes in response to nutrient availability. During rapid exponential growth, CodY is highly active and represses genes whose products allow adaptation to nutrient depletion.</text>
</comment>
<comment type="subcellular location">
    <subcellularLocation>
        <location evidence="1">Cytoplasm</location>
    </subcellularLocation>
</comment>
<comment type="similarity">
    <text evidence="1">Belongs to the CodY family.</text>
</comment>
<sequence length="260" mass="28805">MPNLLQKTRKITSILQRSVDSLETELPYNTMASRLADIIDCNACIINGGGSLLGYAMKYKTNTDRVEEFFETRQFPDAYVKAASRVYDTEANLSVENELTIFPVESKDIYPDGLTTIAPIYGGGMRLGTLIIWRNDNEFSDDDLVLVEISSTVVGIQLLNLQTENLEETIRKQTAVNMAINTLSYSEMKAVAAILSELDGNEGRLTASVIADRIGITRSVIVNALRKLESAGIIESRSLGMKGTYLKVINEGIFDKLKEF</sequence>
<evidence type="ECO:0000255" key="1">
    <source>
        <dbReference type="HAMAP-Rule" id="MF_00621"/>
    </source>
</evidence>
<dbReference type="EMBL" id="CP001129">
    <property type="protein sequence ID" value="ACG61761.1"/>
    <property type="molecule type" value="Genomic_DNA"/>
</dbReference>
<dbReference type="RefSeq" id="WP_012515037.1">
    <property type="nucleotide sequence ID" value="NC_011134.1"/>
</dbReference>
<dbReference type="SMR" id="B4U194"/>
<dbReference type="KEGG" id="sez:Sez_0387"/>
<dbReference type="HOGENOM" id="CLU_089581_0_0_9"/>
<dbReference type="Proteomes" id="UP000001873">
    <property type="component" value="Chromosome"/>
</dbReference>
<dbReference type="GO" id="GO:0005737">
    <property type="term" value="C:cytoplasm"/>
    <property type="evidence" value="ECO:0007669"/>
    <property type="project" value="UniProtKB-SubCell"/>
</dbReference>
<dbReference type="GO" id="GO:0003677">
    <property type="term" value="F:DNA binding"/>
    <property type="evidence" value="ECO:0007669"/>
    <property type="project" value="UniProtKB-UniRule"/>
</dbReference>
<dbReference type="GO" id="GO:0003700">
    <property type="term" value="F:DNA-binding transcription factor activity"/>
    <property type="evidence" value="ECO:0007669"/>
    <property type="project" value="InterPro"/>
</dbReference>
<dbReference type="GO" id="GO:0005525">
    <property type="term" value="F:GTP binding"/>
    <property type="evidence" value="ECO:0007669"/>
    <property type="project" value="InterPro"/>
</dbReference>
<dbReference type="GO" id="GO:0045892">
    <property type="term" value="P:negative regulation of DNA-templated transcription"/>
    <property type="evidence" value="ECO:0007669"/>
    <property type="project" value="UniProtKB-UniRule"/>
</dbReference>
<dbReference type="CDD" id="cd00090">
    <property type="entry name" value="HTH_ARSR"/>
    <property type="match status" value="1"/>
</dbReference>
<dbReference type="FunFam" id="1.10.10.10:FF:000034">
    <property type="entry name" value="GTP-sensing transcriptional pleiotropic repressor CodY"/>
    <property type="match status" value="1"/>
</dbReference>
<dbReference type="FunFam" id="3.30.450.40:FF:000003">
    <property type="entry name" value="GTP-sensing transcriptional pleiotropic repressor CodY"/>
    <property type="match status" value="1"/>
</dbReference>
<dbReference type="Gene3D" id="3.30.450.40">
    <property type="match status" value="1"/>
</dbReference>
<dbReference type="Gene3D" id="1.10.10.10">
    <property type="entry name" value="Winged helix-like DNA-binding domain superfamily/Winged helix DNA-binding domain"/>
    <property type="match status" value="1"/>
</dbReference>
<dbReference type="HAMAP" id="MF_00621">
    <property type="entry name" value="HTH_type_CodY"/>
    <property type="match status" value="1"/>
</dbReference>
<dbReference type="InterPro" id="IPR011991">
    <property type="entry name" value="ArsR-like_HTH"/>
</dbReference>
<dbReference type="InterPro" id="IPR014154">
    <property type="entry name" value="CodY"/>
</dbReference>
<dbReference type="InterPro" id="IPR029016">
    <property type="entry name" value="GAF-like_dom_sf"/>
</dbReference>
<dbReference type="InterPro" id="IPR013198">
    <property type="entry name" value="GTP_trans_reg_CodY_C"/>
</dbReference>
<dbReference type="InterPro" id="IPR010312">
    <property type="entry name" value="Transc_reg_CodY_N"/>
</dbReference>
<dbReference type="InterPro" id="IPR036388">
    <property type="entry name" value="WH-like_DNA-bd_sf"/>
</dbReference>
<dbReference type="InterPro" id="IPR036390">
    <property type="entry name" value="WH_DNA-bd_sf"/>
</dbReference>
<dbReference type="NCBIfam" id="TIGR02787">
    <property type="entry name" value="codY_Gpos"/>
    <property type="match status" value="1"/>
</dbReference>
<dbReference type="NCBIfam" id="NF003170">
    <property type="entry name" value="PRK04158.1"/>
    <property type="match status" value="1"/>
</dbReference>
<dbReference type="PANTHER" id="PTHR40062:SF1">
    <property type="entry name" value="GLOBAL TRANSCRIPTIONAL REGULATOR CODY"/>
    <property type="match status" value="1"/>
</dbReference>
<dbReference type="PANTHER" id="PTHR40062">
    <property type="entry name" value="GTP-SENSING TRANSCRIPTIONAL PLEIOTROPIC REPRESSOR CODY"/>
    <property type="match status" value="1"/>
</dbReference>
<dbReference type="Pfam" id="PF06018">
    <property type="entry name" value="CodY"/>
    <property type="match status" value="1"/>
</dbReference>
<dbReference type="Pfam" id="PF08222">
    <property type="entry name" value="HTH_CodY"/>
    <property type="match status" value="1"/>
</dbReference>
<dbReference type="PIRSF" id="PIRSF011572">
    <property type="entry name" value="GTP_sensing_CodY"/>
    <property type="match status" value="1"/>
</dbReference>
<dbReference type="SUPFAM" id="SSF46785">
    <property type="entry name" value="Winged helix' DNA-binding domain"/>
    <property type="match status" value="1"/>
</dbReference>
<name>CODY_STREM</name>
<feature type="chain" id="PRO_1000130457" description="Global transcriptional regulator CodY">
    <location>
        <begin position="1"/>
        <end position="260"/>
    </location>
</feature>
<feature type="DNA-binding region" description="H-T-H motif" evidence="1">
    <location>
        <begin position="207"/>
        <end position="226"/>
    </location>
</feature>
<feature type="region of interest" description="GAF domain" evidence="1">
    <location>
        <begin position="1"/>
        <end position="159"/>
    </location>
</feature>
<organism>
    <name type="scientific">Streptococcus equi subsp. zooepidemicus (strain MGCS10565)</name>
    <dbReference type="NCBI Taxonomy" id="552526"/>
    <lineage>
        <taxon>Bacteria</taxon>
        <taxon>Bacillati</taxon>
        <taxon>Bacillota</taxon>
        <taxon>Bacilli</taxon>
        <taxon>Lactobacillales</taxon>
        <taxon>Streptococcaceae</taxon>
        <taxon>Streptococcus</taxon>
    </lineage>
</organism>
<keyword id="KW-0963">Cytoplasm</keyword>
<keyword id="KW-0238">DNA-binding</keyword>
<keyword id="KW-0678">Repressor</keyword>
<keyword id="KW-0804">Transcription</keyword>
<keyword id="KW-0805">Transcription regulation</keyword>
<protein>
    <recommendedName>
        <fullName evidence="1">Global transcriptional regulator CodY</fullName>
    </recommendedName>
</protein>
<proteinExistence type="inferred from homology"/>
<reference key="1">
    <citation type="journal article" date="2008" name="PLoS ONE">
        <title>Genome sequence of a lancefield group C Streptococcus zooepidemicus strain causing epidemic nephritis: new information about an old disease.</title>
        <authorList>
            <person name="Beres S.B."/>
            <person name="Sesso R."/>
            <person name="Pinto S.W.L."/>
            <person name="Hoe N.P."/>
            <person name="Porcella S.F."/>
            <person name="Deleo F.R."/>
            <person name="Musser J.M."/>
        </authorList>
    </citation>
    <scope>NUCLEOTIDE SEQUENCE [LARGE SCALE GENOMIC DNA]</scope>
    <source>
        <strain>MGCS10565</strain>
    </source>
</reference>